<proteinExistence type="evidence at protein level"/>
<name>MYCN_MOUSE</name>
<feature type="chain" id="PRO_0000127325" description="N-myc proto-oncogene protein">
    <location>
        <begin position="1"/>
        <end position="462"/>
    </location>
</feature>
<feature type="domain" description="bHLH" evidence="2">
    <location>
        <begin position="379"/>
        <end position="431"/>
    </location>
</feature>
<feature type="region of interest" description="Interaction with AURKA" evidence="1">
    <location>
        <begin position="19"/>
        <end position="47"/>
    </location>
</feature>
<feature type="region of interest" description="Interaction with AURKA and FBXW7" evidence="1">
    <location>
        <begin position="61"/>
        <end position="90"/>
    </location>
</feature>
<feature type="region of interest" description="Disordered" evidence="3">
    <location>
        <begin position="134"/>
        <end position="177"/>
    </location>
</feature>
<feature type="region of interest" description="Disordered" evidence="3">
    <location>
        <begin position="232"/>
        <end position="289"/>
    </location>
</feature>
<feature type="region of interest" description="Disordered" evidence="3">
    <location>
        <begin position="332"/>
        <end position="390"/>
    </location>
</feature>
<feature type="region of interest" description="Leucine-zipper">
    <location>
        <begin position="431"/>
        <end position="452"/>
    </location>
</feature>
<feature type="short sequence motif" description="9aaTAD" evidence="1">
    <location>
        <begin position="76"/>
        <end position="85"/>
    </location>
</feature>
<feature type="compositionally biased region" description="Low complexity" evidence="3">
    <location>
        <begin position="143"/>
        <end position="176"/>
    </location>
</feature>
<feature type="compositionally biased region" description="Low complexity" evidence="3">
    <location>
        <begin position="232"/>
        <end position="244"/>
    </location>
</feature>
<feature type="compositionally biased region" description="Acidic residues" evidence="3">
    <location>
        <begin position="257"/>
        <end position="276"/>
    </location>
</feature>
<feature type="modified residue" description="Phosphoserine; by CK2" evidence="1">
    <location>
        <position position="259"/>
    </location>
</feature>
<feature type="modified residue" description="Phosphoserine; by CK2" evidence="1">
    <location>
        <position position="261"/>
    </location>
</feature>
<feature type="mutagenesis site" description="Results in decreased phosphorylation and subsequent protein accumulation. Heterozygous mutant mice have postaxial polydactyly, higher brain weight and thicker cerebral cortex layers than wild-type animals, and reproductive system and kidney anomalies." evidence="5">
    <original>T</original>
    <variation>M</variation>
    <location>
        <position position="58"/>
    </location>
</feature>
<feature type="sequence conflict" description="In Ref. 1; AAA39788." evidence="7" ref="1">
    <original>FY</original>
    <variation>LH</variation>
    <location>
        <begin position="28"/>
        <end position="29"/>
    </location>
</feature>
<feature type="sequence conflict" description="In Ref. 1; AAA39788." evidence="7" ref="1">
    <original>Y</original>
    <variation>H</variation>
    <location>
        <position position="36"/>
    </location>
</feature>
<feature type="sequence conflict" description="In Ref. 1; AAA39788." evidence="7" ref="1">
    <original>EA</original>
    <variation>GT</variation>
    <location>
        <begin position="246"/>
        <end position="247"/>
    </location>
</feature>
<feature type="sequence conflict" description="In Ref. 1; AAA39788." evidence="7" ref="1">
    <original>P</original>
    <variation>L</variation>
    <location>
        <position position="313"/>
    </location>
</feature>
<feature type="sequence conflict" description="In Ref. 2; CAA27557." evidence="7" ref="2">
    <original>Q</original>
    <variation>E</variation>
    <location>
        <position position="390"/>
    </location>
</feature>
<gene>
    <name type="primary">Mycn</name>
    <name type="synonym">Nmyc</name>
    <name type="synonym">Nmyc1</name>
</gene>
<organism>
    <name type="scientific">Mus musculus</name>
    <name type="common">Mouse</name>
    <dbReference type="NCBI Taxonomy" id="10090"/>
    <lineage>
        <taxon>Eukaryota</taxon>
        <taxon>Metazoa</taxon>
        <taxon>Chordata</taxon>
        <taxon>Craniata</taxon>
        <taxon>Vertebrata</taxon>
        <taxon>Euteleostomi</taxon>
        <taxon>Mammalia</taxon>
        <taxon>Eutheria</taxon>
        <taxon>Euarchontoglires</taxon>
        <taxon>Glires</taxon>
        <taxon>Rodentia</taxon>
        <taxon>Myomorpha</taxon>
        <taxon>Muroidea</taxon>
        <taxon>Muridae</taxon>
        <taxon>Murinae</taxon>
        <taxon>Mus</taxon>
        <taxon>Mus</taxon>
    </lineage>
</organism>
<dbReference type="EMBL" id="M12731">
    <property type="protein sequence ID" value="AAA39788.1"/>
    <property type="molecule type" value="Genomic_DNA"/>
</dbReference>
<dbReference type="EMBL" id="X03919">
    <property type="protein sequence ID" value="CAA27557.1"/>
    <property type="molecule type" value="Genomic_DNA"/>
</dbReference>
<dbReference type="EMBL" id="M36277">
    <property type="protein sequence ID" value="AAA39833.1"/>
    <property type="molecule type" value="mRNA"/>
</dbReference>
<dbReference type="EMBL" id="M29208">
    <property type="protein sequence ID" value="AAA39830.1"/>
    <property type="molecule type" value="Genomic_DNA"/>
</dbReference>
<dbReference type="EMBL" id="X06993">
    <property type="status" value="NOT_ANNOTATED_CDS"/>
    <property type="molecule type" value="Genomic_DNA"/>
</dbReference>
<dbReference type="CCDS" id="CCDS25818.1"/>
<dbReference type="PIR" id="A01356">
    <property type="entry name" value="TVMSMC"/>
</dbReference>
<dbReference type="PIR" id="A01357">
    <property type="entry name" value="TVMSM2"/>
</dbReference>
<dbReference type="RefSeq" id="NP_032735.3">
    <property type="nucleotide sequence ID" value="NM_008709.3"/>
</dbReference>
<dbReference type="SMR" id="P03966"/>
<dbReference type="BioGRID" id="201795">
    <property type="interactions" value="8"/>
</dbReference>
<dbReference type="DIP" id="DIP-49592N"/>
<dbReference type="FunCoup" id="P03966">
    <property type="interactions" value="2010"/>
</dbReference>
<dbReference type="IntAct" id="P03966">
    <property type="interactions" value="7"/>
</dbReference>
<dbReference type="STRING" id="10090.ENSMUSP00000045993"/>
<dbReference type="GlyGen" id="P03966">
    <property type="glycosylation" value="3 sites, 1 O-linked glycan (1 site)"/>
</dbReference>
<dbReference type="iPTMnet" id="P03966"/>
<dbReference type="PhosphoSitePlus" id="P03966"/>
<dbReference type="PaxDb" id="10090-ENSMUSP00000045993"/>
<dbReference type="DNASU" id="18109"/>
<dbReference type="Ensembl" id="ENSMUST00000043396.15">
    <property type="protein sequence ID" value="ENSMUSP00000045993.8"/>
    <property type="gene ID" value="ENSMUSG00000037169.16"/>
</dbReference>
<dbReference type="Ensembl" id="ENSMUST00000130990.2">
    <property type="protein sequence ID" value="ENSMUSP00000114225.2"/>
    <property type="gene ID" value="ENSMUSG00000037169.16"/>
</dbReference>
<dbReference type="GeneID" id="18109"/>
<dbReference type="KEGG" id="mmu:18109"/>
<dbReference type="UCSC" id="uc007nbf.2">
    <property type="organism name" value="mouse"/>
</dbReference>
<dbReference type="AGR" id="MGI:97357"/>
<dbReference type="CTD" id="4613"/>
<dbReference type="MGI" id="MGI:97357">
    <property type="gene designation" value="Mycn"/>
</dbReference>
<dbReference type="VEuPathDB" id="HostDB:ENSMUSG00000037169"/>
<dbReference type="eggNOG" id="KOG2588">
    <property type="taxonomic scope" value="Eukaryota"/>
</dbReference>
<dbReference type="GeneTree" id="ENSGT00940000158432"/>
<dbReference type="HOGENOM" id="CLU_052560_0_0_1"/>
<dbReference type="InParanoid" id="P03966"/>
<dbReference type="OMA" id="PHGKEAP"/>
<dbReference type="OrthoDB" id="5964374at2759"/>
<dbReference type="PhylomeDB" id="P03966"/>
<dbReference type="TreeFam" id="TF106001"/>
<dbReference type="BioGRID-ORCS" id="18109">
    <property type="hits" value="5 hits in 78 CRISPR screens"/>
</dbReference>
<dbReference type="ChiTaRS" id="Mycn">
    <property type="organism name" value="mouse"/>
</dbReference>
<dbReference type="PRO" id="PR:P03966"/>
<dbReference type="Proteomes" id="UP000000589">
    <property type="component" value="Chromosome 12"/>
</dbReference>
<dbReference type="RNAct" id="P03966">
    <property type="molecule type" value="protein"/>
</dbReference>
<dbReference type="Bgee" id="ENSMUSG00000037169">
    <property type="expression patterns" value="Expressed in primitive streak and 275 other cell types or tissues"/>
</dbReference>
<dbReference type="ExpressionAtlas" id="P03966">
    <property type="expression patterns" value="baseline and differential"/>
</dbReference>
<dbReference type="GO" id="GO:0005730">
    <property type="term" value="C:nucleolus"/>
    <property type="evidence" value="ECO:0007669"/>
    <property type="project" value="Ensembl"/>
</dbReference>
<dbReference type="GO" id="GO:0005654">
    <property type="term" value="C:nucleoplasm"/>
    <property type="evidence" value="ECO:0007669"/>
    <property type="project" value="Ensembl"/>
</dbReference>
<dbReference type="GO" id="GO:0005634">
    <property type="term" value="C:nucleus"/>
    <property type="evidence" value="ECO:0000314"/>
    <property type="project" value="MGI"/>
</dbReference>
<dbReference type="GO" id="GO:0001228">
    <property type="term" value="F:DNA-binding transcription activator activity, RNA polymerase II-specific"/>
    <property type="evidence" value="ECO:0007669"/>
    <property type="project" value="Ensembl"/>
</dbReference>
<dbReference type="GO" id="GO:0019900">
    <property type="term" value="F:kinase binding"/>
    <property type="evidence" value="ECO:0007669"/>
    <property type="project" value="Ensembl"/>
</dbReference>
<dbReference type="GO" id="GO:0046983">
    <property type="term" value="F:protein dimerization activity"/>
    <property type="evidence" value="ECO:0007669"/>
    <property type="project" value="InterPro"/>
</dbReference>
<dbReference type="GO" id="GO:0000978">
    <property type="term" value="F:RNA polymerase II cis-regulatory region sequence-specific DNA binding"/>
    <property type="evidence" value="ECO:0007669"/>
    <property type="project" value="Ensembl"/>
</dbReference>
<dbReference type="GO" id="GO:0048708">
    <property type="term" value="P:astrocyte differentiation"/>
    <property type="evidence" value="ECO:0000314"/>
    <property type="project" value="MGI"/>
</dbReference>
<dbReference type="GO" id="GO:0141068">
    <property type="term" value="P:autosome genomic imprinting"/>
    <property type="evidence" value="ECO:0000315"/>
    <property type="project" value="BHF-UCL"/>
</dbReference>
<dbReference type="GO" id="GO:0048754">
    <property type="term" value="P:branching morphogenesis of an epithelial tube"/>
    <property type="evidence" value="ECO:0000315"/>
    <property type="project" value="MGI"/>
</dbReference>
<dbReference type="GO" id="GO:0001502">
    <property type="term" value="P:cartilage condensation"/>
    <property type="evidence" value="ECO:0000315"/>
    <property type="project" value="MGI"/>
</dbReference>
<dbReference type="GO" id="GO:0008283">
    <property type="term" value="P:cell population proliferation"/>
    <property type="evidence" value="ECO:0000315"/>
    <property type="project" value="MGI"/>
</dbReference>
<dbReference type="GO" id="GO:0042733">
    <property type="term" value="P:embryonic digit morphogenesis"/>
    <property type="evidence" value="ECO:0000315"/>
    <property type="project" value="MGI"/>
</dbReference>
<dbReference type="GO" id="GO:0048704">
    <property type="term" value="P:embryonic skeletal system morphogenesis"/>
    <property type="evidence" value="ECO:0000315"/>
    <property type="project" value="MGI"/>
</dbReference>
<dbReference type="GO" id="GO:0050673">
    <property type="term" value="P:epithelial cell proliferation"/>
    <property type="evidence" value="ECO:0000315"/>
    <property type="project" value="MGI"/>
</dbReference>
<dbReference type="GO" id="GO:0030324">
    <property type="term" value="P:lung development"/>
    <property type="evidence" value="ECO:0000315"/>
    <property type="project" value="MGI"/>
</dbReference>
<dbReference type="GO" id="GO:0048712">
    <property type="term" value="P:negative regulation of astrocyte differentiation"/>
    <property type="evidence" value="ECO:0000314"/>
    <property type="project" value="MGI"/>
</dbReference>
<dbReference type="GO" id="GO:0010629">
    <property type="term" value="P:negative regulation of gene expression"/>
    <property type="evidence" value="ECO:0007669"/>
    <property type="project" value="Ensembl"/>
</dbReference>
<dbReference type="GO" id="GO:2000378">
    <property type="term" value="P:negative regulation of reactive oxygen species metabolic process"/>
    <property type="evidence" value="ECO:0000314"/>
    <property type="project" value="UniProtKB"/>
</dbReference>
<dbReference type="GO" id="GO:0045893">
    <property type="term" value="P:positive regulation of DNA-templated transcription"/>
    <property type="evidence" value="ECO:0000314"/>
    <property type="project" value="UniProtKB"/>
</dbReference>
<dbReference type="GO" id="GO:0050679">
    <property type="term" value="P:positive regulation of epithelial cell proliferation"/>
    <property type="evidence" value="ECO:0000315"/>
    <property type="project" value="MGI"/>
</dbReference>
<dbReference type="GO" id="GO:0010628">
    <property type="term" value="P:positive regulation of gene expression"/>
    <property type="evidence" value="ECO:0007669"/>
    <property type="project" value="Ensembl"/>
</dbReference>
<dbReference type="GO" id="GO:0002053">
    <property type="term" value="P:positive regulation of mesenchymal cell proliferation"/>
    <property type="evidence" value="ECO:0000315"/>
    <property type="project" value="MGI"/>
</dbReference>
<dbReference type="GO" id="GO:0043068">
    <property type="term" value="P:positive regulation of programmed cell death"/>
    <property type="evidence" value="ECO:0000315"/>
    <property type="project" value="MGI"/>
</dbReference>
<dbReference type="GO" id="GO:0045944">
    <property type="term" value="P:positive regulation of transcription by RNA polymerase II"/>
    <property type="evidence" value="ECO:0000315"/>
    <property type="project" value="BHF-UCL"/>
</dbReference>
<dbReference type="GO" id="GO:0045607">
    <property type="term" value="P:regulation of inner ear auditory receptor cell differentiation"/>
    <property type="evidence" value="ECO:0000316"/>
    <property type="project" value="MGI"/>
</dbReference>
<dbReference type="CDD" id="cd11456">
    <property type="entry name" value="bHLHzip_N-Myc_like"/>
    <property type="match status" value="1"/>
</dbReference>
<dbReference type="FunFam" id="4.10.280.10:FF:000019">
    <property type="entry name" value="Myc proto-oncogene protein"/>
    <property type="match status" value="1"/>
</dbReference>
<dbReference type="Gene3D" id="4.10.280.10">
    <property type="entry name" value="Helix-loop-helix DNA-binding domain"/>
    <property type="match status" value="1"/>
</dbReference>
<dbReference type="InterPro" id="IPR011598">
    <property type="entry name" value="bHLH_dom"/>
</dbReference>
<dbReference type="InterPro" id="IPR036638">
    <property type="entry name" value="HLH_DNA-bd_sf"/>
</dbReference>
<dbReference type="InterPro" id="IPR050433">
    <property type="entry name" value="Myc_transcription_factors"/>
</dbReference>
<dbReference type="InterPro" id="IPR002418">
    <property type="entry name" value="Tscrpt_reg_Myc"/>
</dbReference>
<dbReference type="InterPro" id="IPR012682">
    <property type="entry name" value="Tscrpt_reg_Myc_N"/>
</dbReference>
<dbReference type="PANTHER" id="PTHR45851">
    <property type="entry name" value="MYC PROTO-ONCOGENE"/>
    <property type="match status" value="1"/>
</dbReference>
<dbReference type="Pfam" id="PF00010">
    <property type="entry name" value="HLH"/>
    <property type="match status" value="1"/>
</dbReference>
<dbReference type="Pfam" id="PF01056">
    <property type="entry name" value="Myc_N"/>
    <property type="match status" value="1"/>
</dbReference>
<dbReference type="PIRSF" id="PIRSF001705">
    <property type="entry name" value="Myc_protein"/>
    <property type="match status" value="1"/>
</dbReference>
<dbReference type="PRINTS" id="PR00044">
    <property type="entry name" value="LEUZIPPRMYC"/>
</dbReference>
<dbReference type="SMART" id="SM00353">
    <property type="entry name" value="HLH"/>
    <property type="match status" value="1"/>
</dbReference>
<dbReference type="SUPFAM" id="SSF47459">
    <property type="entry name" value="HLH, helix-loop-helix DNA-binding domain"/>
    <property type="match status" value="1"/>
</dbReference>
<dbReference type="PROSITE" id="PS50888">
    <property type="entry name" value="BHLH"/>
    <property type="match status" value="1"/>
</dbReference>
<keyword id="KW-0238">DNA-binding</keyword>
<keyword id="KW-0539">Nucleus</keyword>
<keyword id="KW-0597">Phosphoprotein</keyword>
<keyword id="KW-0656">Proto-oncogene</keyword>
<keyword id="KW-1185">Reference proteome</keyword>
<accession>P03966</accession>
<accession>Q61978</accession>
<evidence type="ECO:0000250" key="1">
    <source>
        <dbReference type="UniProtKB" id="P04198"/>
    </source>
</evidence>
<evidence type="ECO:0000255" key="2">
    <source>
        <dbReference type="PROSITE-ProRule" id="PRU00981"/>
    </source>
</evidence>
<evidence type="ECO:0000256" key="3">
    <source>
        <dbReference type="SAM" id="MobiDB-lite"/>
    </source>
</evidence>
<evidence type="ECO:0000269" key="4">
    <source>
    </source>
</evidence>
<evidence type="ECO:0000269" key="5">
    <source>
    </source>
</evidence>
<evidence type="ECO:0000269" key="6">
    <source>
    </source>
</evidence>
<evidence type="ECO:0000305" key="7"/>
<sequence>MPSCTASTMPGMICKNPDLEFDSLQPCFYPDEDDFYFGGPDSTPPGEDIWKKFELLPTPPLSPSRAFPEHSPEPSNWATEMLLPEADLWGNPAEEDAFGLGGLGGLTPNPVILQDCMWSGFSAREKLERAVNEKLQHGHGPPGVSSACSAPGVGASSPGGRALGGSSSASHTGATLPTDLSHPAAECVDPAVVFPFPVNKRESASVPAAPTSAPATSAAVTSVSVPATAPVAAPARAGGRPASSGEAKALSTSGEDTLSDSDDEDDEEEDEEEEIDVVTVEKRRSSSNNKAVTTFTITVRPKTSALGLGRAQPGELILKRCVPIHQQHNYAAPSPYVESEDAPPQKKIKSEASPRPLKSVVPAKAKSLSPRNSDSEDSERRRNHNILERQRRNDLRSSFLTLRDHVPELVKNEKAAKVVILKKATEYVHALQANEHQLLLEKEKLQARQQQLLKKIEHARTC</sequence>
<protein>
    <recommendedName>
        <fullName>N-myc proto-oncogene protein</fullName>
    </recommendedName>
</protein>
<reference key="1">
    <citation type="journal article" date="1986" name="Proc. Natl. Acad. Sci. U.S.A.">
        <title>Structure and expression of the murine N-myc gene.</title>
        <authorList>
            <person name="DePinho R.A."/>
            <person name="Legouy E."/>
            <person name="Feldman L.B."/>
            <person name="Kohl N.E."/>
            <person name="Yancopoulos G.D."/>
            <person name="Alt F.W."/>
        </authorList>
    </citation>
    <scope>NUCLEOTIDE SEQUENCE [GENOMIC DNA]</scope>
</reference>
<reference key="2">
    <citation type="journal article" date="1986" name="EMBO J.">
        <title>Nucleotide sequence of the coding region of the mouse N-myc gene.</title>
        <authorList>
            <person name="Taya Y."/>
            <person name="Mizusawa S."/>
            <person name="Nishimura S."/>
        </authorList>
    </citation>
    <scope>NUCLEOTIDE SEQUENCE [GENOMIC DNA]</scope>
</reference>
<reference key="3">
    <citation type="submission" date="1992-04" db="EMBL/GenBank/DDBJ databases">
        <title>Expression of murine N-myc by insertion of retrovirus sequences in murine macrophage cell lines.</title>
        <authorList>
            <person name="Nasu N."/>
            <person name="Setoguchi M."/>
            <person name="Yoshiyama K."/>
            <person name="Matsuura K."/>
            <person name="Yamamoto S."/>
        </authorList>
    </citation>
    <scope>NUCLEOTIDE SEQUENCE OF 1-456</scope>
    <source>
        <strain>BALB/cJ</strain>
    </source>
</reference>
<reference key="4">
    <citation type="journal article" date="1989" name="Mol. Cell. Biol.">
        <title>Insertional activation of N-myc by endogenous Moloney-like murine retrovirus sequences in macrophage cell lines derived from myeloma cell line-macrophage hybrids.</title>
        <authorList>
            <person name="Setoguchi M."/>
            <person name="Higuchi Y."/>
            <person name="Yoshida S."/>
            <person name="Nasu N."/>
            <person name="Miyazaki Y."/>
            <person name="Akizuki S."/>
            <person name="Yamamoto S."/>
        </authorList>
    </citation>
    <scope>NUCLEOTIDE SEQUENCE [GENOMIC DNA] OF 327-462</scope>
</reference>
<reference key="5">
    <citation type="journal article" date="1988" name="Nucleic Acids Res.">
        <title>Complete nucleotide sequence and exon-intron boundaries of the 5' non-coding region of the mouse N-myc gene.</title>
        <authorList>
            <person name="Katoh K."/>
            <person name="Sawai S."/>
            <person name="Ueno K."/>
            <person name="Kondoh H."/>
        </authorList>
    </citation>
    <scope>NUCLEOTIDE SEQUENCE [GENOMIC DNA] OF 1-39</scope>
</reference>
<reference key="6">
    <citation type="journal article" date="1995" name="EMBO J.">
        <title>Mad3 and Mad4: novel Max-interacting transcriptional repressors that suppress c-myc dependent transformation and are expressed during neural and epidermal differentiation.</title>
        <authorList>
            <person name="Hurlin P.J."/>
            <person name="Queva C."/>
            <person name="Koskinen P.J."/>
            <person name="Steingrimsson E."/>
            <person name="Ayer D.E."/>
            <person name="Copeland N.G."/>
            <person name="Jenkins N.A."/>
            <person name="Eisenman R.N."/>
        </authorList>
    </citation>
    <scope>DEVELOPMENTAL STAGE</scope>
</reference>
<reference key="7">
    <citation type="journal article" date="1996" name="EMBO J.">
        <authorList>
            <person name="Hurlin P.J."/>
            <person name="Queva C."/>
            <person name="Koskinen P.J."/>
            <person name="Steingrimsson E."/>
            <person name="Ayer D.E."/>
            <person name="Copeland N.G."/>
            <person name="Jenkins N.A."/>
            <person name="Eisenman R.N."/>
        </authorList>
    </citation>
    <scope>ERRATUM OF PUBMED:8521822</scope>
</reference>
<reference key="8">
    <citation type="journal article" date="2019" name="J. Med. Genet.">
        <title>MYCN de novo gain-of-function mutation in a patient with a novel megalencephaly syndrome.</title>
        <authorList>
            <person name="Kato K."/>
            <person name="Miya F."/>
            <person name="Hamada N."/>
            <person name="Negishi Y."/>
            <person name="Narumi-Kishimoto Y."/>
            <person name="Ozawa H."/>
            <person name="Ito H."/>
            <person name="Hori I."/>
            <person name="Hattori A."/>
            <person name="Okamoto N."/>
            <person name="Kato M."/>
            <person name="Tsunoda T."/>
            <person name="Kanemura Y."/>
            <person name="Kosaki K."/>
            <person name="Takahashi Y."/>
            <person name="Nagata K.I."/>
            <person name="Saitoh S."/>
        </authorList>
    </citation>
    <scope>DEVELOPMENTAL STAGE</scope>
</reference>
<reference key="9">
    <citation type="journal article" date="2023" name="HGG Adv.">
        <title>Gain-of-function MYCN causes a megalencephaly-polydactyly syndrome manifesting mirror phenotypes of Feingold syndrome.</title>
        <authorList>
            <person name="Nishio Y."/>
            <person name="Kato K."/>
            <person name="Tran Mau-Them F."/>
            <person name="Futagawa H."/>
            <person name="Quelin C."/>
            <person name="Masuda S."/>
            <person name="Vitobello A."/>
            <person name="Otsuji S."/>
            <person name="Shawki H.H."/>
            <person name="Oishi H."/>
            <person name="Thauvin-Robinet C."/>
            <person name="Takenouchi T."/>
            <person name="Kosaki K."/>
            <person name="Takahashi Y."/>
            <person name="Saitoh S."/>
        </authorList>
    </citation>
    <scope>MUTAGENESIS OF THR-58</scope>
</reference>
<comment type="function">
    <text evidence="1">Positively regulates the transcription of MYCNOS in neuroblastoma cells.</text>
</comment>
<comment type="subunit">
    <text evidence="1">Efficient DNA binding requires dimerization with another bHLH protein. Binds DNA as a heterodimer with MAX. Interacts with KDM5A, KDM5B and HUWE1. Interacts with MYCNOS. Interacts with AURKA; interaction is phospho-independent and triggers AURKA activation; AURKA competes with FBXW7 for binding to unphosphorylated MYCN but not for binding to unphosphorylated MYCN. Interacts with FBXW7; FBXW7 competes with AURKA for binding to unphosphorylated MYCN but not for binding to phosphorylated MYCN.</text>
</comment>
<comment type="subcellular location">
    <subcellularLocation>
        <location>Nucleus</location>
    </subcellularLocation>
</comment>
<comment type="developmental stage">
    <text evidence="4 6">Highly expressed in the developing brain at embryonic day 13.5 dpc, then expression gradually decreases to its lowest level by postnatal day P15 (PubMed:30573562). In the spinal cord at embryonic days 10.5, 11.5 and 12.5 dpc, expressed in the proliferating cells of the ventricular zone of the neural tube and is expressed at reduced levels in the intermediate zone. At 14.5 dpc, found in regions containing differentiating post-mitotic neurons. In the developing epidermis at 17 dpc, expression is restricted to primary hair germ cells only.</text>
</comment>
<comment type="domain">
    <text evidence="1">The 9aaTAD motif is a transactivation domain present in a large number of yeast and animal transcription factors.</text>
</comment>
<comment type="PTM">
    <text evidence="1">Phosphorylated by GSK3-beta which may promote its degradation. Phosphorylated by AURKA.</text>
</comment>